<proteinExistence type="evidence at protein level"/>
<reference key="1">
    <citation type="journal article" date="2001" name="J. Biol. Chem.">
        <title>Structural compensation for the deficit of rRNA with proteins in the mammalian mitochondrial ribosome. Systematic analysis of protein components of the large ribosomal subunit from mammalian mitochondria.</title>
        <authorList>
            <person name="Suzuki T."/>
            <person name="Terasaki M."/>
            <person name="Takemoto-Hori C."/>
            <person name="Hanada T."/>
            <person name="Ueda T."/>
            <person name="Wada A."/>
            <person name="Watanabe K."/>
        </authorList>
    </citation>
    <scope>NUCLEOTIDE SEQUENCE [MRNA]</scope>
    <scope>SUBCELLULAR LOCATION</scope>
</reference>
<reference key="2">
    <citation type="journal article" date="2004" name="Hum. Mol. Genet.">
        <title>Twinkle helicase is essential for mtDNA maintenance and regulates mtDNA copy number.</title>
        <authorList>
            <person name="Tyynismaa H."/>
            <person name="Sembongi H."/>
            <person name="Bokori-Brown M."/>
            <person name="Granycome C."/>
            <person name="Ashley N."/>
            <person name="Poulton J."/>
            <person name="Jalanko A."/>
            <person name="Spelbrink J.N."/>
            <person name="Holt I.J."/>
            <person name="Suomalainen A."/>
        </authorList>
    </citation>
    <scope>TISSUE SPECIFICITY</scope>
    <scope>COREGULATION WITH TWNK</scope>
</reference>
<reference key="3">
    <citation type="journal article" date="2010" name="Cell">
        <title>A tissue-specific atlas of mouse protein phosphorylation and expression.</title>
        <authorList>
            <person name="Huttlin E.L."/>
            <person name="Jedrychowski M.P."/>
            <person name="Elias J.E."/>
            <person name="Goswami T."/>
            <person name="Rad R."/>
            <person name="Beausoleil S.A."/>
            <person name="Villen J."/>
            <person name="Haas W."/>
            <person name="Sowa M.E."/>
            <person name="Gygi S.P."/>
        </authorList>
    </citation>
    <scope>IDENTIFICATION BY MASS SPECTROMETRY [LARGE SCALE ANALYSIS]</scope>
    <source>
        <tissue>Brown adipose tissue</tissue>
        <tissue>Testis</tissue>
    </source>
</reference>
<feature type="transit peptide" description="Mitochondrion" evidence="2">
    <location>
        <begin position="1"/>
        <end status="unknown"/>
    </location>
</feature>
<feature type="chain" id="PRO_0000030562" description="Large ribosomal subunit protein mL43">
    <location>
        <begin status="unknown"/>
        <end position="183"/>
    </location>
</feature>
<feature type="region of interest" description="Disordered" evidence="3">
    <location>
        <begin position="120"/>
        <end position="144"/>
    </location>
</feature>
<feature type="region of interest" description="Disordered" evidence="3">
    <location>
        <begin position="162"/>
        <end position="183"/>
    </location>
</feature>
<feature type="compositionally biased region" description="Polar residues" evidence="3">
    <location>
        <begin position="122"/>
        <end position="139"/>
    </location>
</feature>
<feature type="compositionally biased region" description="Basic and acidic residues" evidence="3">
    <location>
        <begin position="162"/>
        <end position="172"/>
    </location>
</feature>
<sequence length="183" mass="20203">MTGRGTSSRFLTSVLHNGLGRYVQQLQRLSLSLSRDAPSSRGAREFVEREVTDFARRNPGVVVYVNPRPCAMPRIVAEYLNGAVREENVNSKSVEEIKSLVQKLADQSGLDVIRIRKPFHTDNPSIQGQWTPSPTNGLPSTGCGPENSGILLQLRCKHSKEPGALDRERDRIGSSFGFQAQAE</sequence>
<name>RM43_MOUSE</name>
<keyword id="KW-0496">Mitochondrion</keyword>
<keyword id="KW-1185">Reference proteome</keyword>
<keyword id="KW-0687">Ribonucleoprotein</keyword>
<keyword id="KW-0689">Ribosomal protein</keyword>
<keyword id="KW-0809">Transit peptide</keyword>
<comment type="subunit">
    <text evidence="1">Component of the mitochondrial ribosome large subunit (39S) which comprises a 16S rRNA and about 50 distinct proteins.</text>
</comment>
<comment type="subcellular location">
    <subcellularLocation>
        <location evidence="4">Mitochondrion</location>
    </subcellularLocation>
</comment>
<comment type="tissue specificity">
    <text evidence="5">Ubiquitous with the highest levels in the liver, heart and kidneys. The skeletal muscle, brain and testis showed lower but detectable expression. Expression is coregulated with TWNK.</text>
</comment>
<comment type="similarity">
    <text evidence="6">Belongs to the mitochondrion-specific ribosomal protein mL43 family.</text>
</comment>
<protein>
    <recommendedName>
        <fullName evidence="6">Large ribosomal subunit protein mL43</fullName>
    </recommendedName>
    <alternativeName>
        <fullName>39S ribosomal protein L43, mitochondrial</fullName>
        <shortName>L43mt</shortName>
        <shortName>MRP-L43</shortName>
    </alternativeName>
    <alternativeName>
        <fullName>Mitochondrial ribosomal protein bMRP36a</fullName>
    </alternativeName>
</protein>
<organism>
    <name type="scientific">Mus musculus</name>
    <name type="common">Mouse</name>
    <dbReference type="NCBI Taxonomy" id="10090"/>
    <lineage>
        <taxon>Eukaryota</taxon>
        <taxon>Metazoa</taxon>
        <taxon>Chordata</taxon>
        <taxon>Craniata</taxon>
        <taxon>Vertebrata</taxon>
        <taxon>Euteleostomi</taxon>
        <taxon>Mammalia</taxon>
        <taxon>Eutheria</taxon>
        <taxon>Euarchontoglires</taxon>
        <taxon>Glires</taxon>
        <taxon>Rodentia</taxon>
        <taxon>Myomorpha</taxon>
        <taxon>Muroidea</taxon>
        <taxon>Muridae</taxon>
        <taxon>Murinae</taxon>
        <taxon>Mus</taxon>
        <taxon>Mus</taxon>
    </lineage>
</organism>
<dbReference type="EMBL" id="AB049657">
    <property type="protein sequence ID" value="BAB40862.1"/>
    <property type="molecule type" value="mRNA"/>
</dbReference>
<dbReference type="SMR" id="Q99N89"/>
<dbReference type="ComplexPortal" id="CPX-5302">
    <property type="entry name" value="39S mitochondrial large ribosomal subunit"/>
</dbReference>
<dbReference type="FunCoup" id="Q99N89">
    <property type="interactions" value="1614"/>
</dbReference>
<dbReference type="STRING" id="10090.ENSMUSP00000095322"/>
<dbReference type="PhosphoSitePlus" id="Q99N89"/>
<dbReference type="PaxDb" id="10090-ENSMUSP00000095322"/>
<dbReference type="PeptideAtlas" id="Q99N89"/>
<dbReference type="ProteomicsDB" id="299861"/>
<dbReference type="Pumba" id="Q99N89"/>
<dbReference type="AGR" id="MGI:2137229"/>
<dbReference type="MGI" id="MGI:2137229">
    <property type="gene designation" value="Mrpl43"/>
</dbReference>
<dbReference type="eggNOG" id="KOG3445">
    <property type="taxonomic scope" value="Eukaryota"/>
</dbReference>
<dbReference type="InParanoid" id="Q99N89"/>
<dbReference type="PhylomeDB" id="Q99N89"/>
<dbReference type="Reactome" id="R-MMU-5389840">
    <property type="pathway name" value="Mitochondrial translation elongation"/>
</dbReference>
<dbReference type="Reactome" id="R-MMU-5419276">
    <property type="pathway name" value="Mitochondrial translation termination"/>
</dbReference>
<dbReference type="ChiTaRS" id="Mrpl43">
    <property type="organism name" value="mouse"/>
</dbReference>
<dbReference type="PRO" id="PR:Q99N89"/>
<dbReference type="Proteomes" id="UP000000589">
    <property type="component" value="Unplaced"/>
</dbReference>
<dbReference type="RNAct" id="Q99N89">
    <property type="molecule type" value="protein"/>
</dbReference>
<dbReference type="GO" id="GO:0005743">
    <property type="term" value="C:mitochondrial inner membrane"/>
    <property type="evidence" value="ECO:0000303"/>
    <property type="project" value="ComplexPortal"/>
</dbReference>
<dbReference type="GO" id="GO:0005762">
    <property type="term" value="C:mitochondrial large ribosomal subunit"/>
    <property type="evidence" value="ECO:0000250"/>
    <property type="project" value="UniProtKB"/>
</dbReference>
<dbReference type="GO" id="GO:0005739">
    <property type="term" value="C:mitochondrion"/>
    <property type="evidence" value="ECO:0007005"/>
    <property type="project" value="MGI"/>
</dbReference>
<dbReference type="GO" id="GO:0003735">
    <property type="term" value="F:structural constituent of ribosome"/>
    <property type="evidence" value="ECO:0000266"/>
    <property type="project" value="MGI"/>
</dbReference>
<dbReference type="GO" id="GO:0032543">
    <property type="term" value="P:mitochondrial translation"/>
    <property type="evidence" value="ECO:0000303"/>
    <property type="project" value="ComplexPortal"/>
</dbReference>
<dbReference type="GO" id="GO:0006412">
    <property type="term" value="P:translation"/>
    <property type="evidence" value="ECO:0000266"/>
    <property type="project" value="MGI"/>
</dbReference>
<dbReference type="FunFam" id="3.40.30.10:FF:000078">
    <property type="entry name" value="39S ribosomal protein L43, mitochondrial"/>
    <property type="match status" value="1"/>
</dbReference>
<dbReference type="Gene3D" id="3.40.30.10">
    <property type="entry name" value="Glutaredoxin"/>
    <property type="match status" value="1"/>
</dbReference>
<dbReference type="InterPro" id="IPR039927">
    <property type="entry name" value="Ribosomal_mL43"/>
</dbReference>
<dbReference type="InterPro" id="IPR007741">
    <property type="entry name" value="Ribosomal_mL43/mS25/NADH_DH"/>
</dbReference>
<dbReference type="InterPro" id="IPR036249">
    <property type="entry name" value="Thioredoxin-like_sf"/>
</dbReference>
<dbReference type="PANTHER" id="PTHR21396">
    <property type="entry name" value="39S RIBOSOMAL PROTEIN L43"/>
    <property type="match status" value="1"/>
</dbReference>
<dbReference type="PANTHER" id="PTHR21396:SF2">
    <property type="entry name" value="LARGE RIBOSOMAL SUBUNIT PROTEIN ML43"/>
    <property type="match status" value="1"/>
</dbReference>
<dbReference type="Pfam" id="PF05047">
    <property type="entry name" value="L51_S25_CI-B8"/>
    <property type="match status" value="1"/>
</dbReference>
<dbReference type="SMART" id="SM00916">
    <property type="entry name" value="L51_S25_CI-B8"/>
    <property type="match status" value="1"/>
</dbReference>
<dbReference type="SUPFAM" id="SSF52833">
    <property type="entry name" value="Thioredoxin-like"/>
    <property type="match status" value="1"/>
</dbReference>
<gene>
    <name type="primary">Mrpl43</name>
</gene>
<accession>Q99N89</accession>
<evidence type="ECO:0000250" key="1">
    <source>
        <dbReference type="UniProtKB" id="Q8N983"/>
    </source>
</evidence>
<evidence type="ECO:0000255" key="2"/>
<evidence type="ECO:0000256" key="3">
    <source>
        <dbReference type="SAM" id="MobiDB-lite"/>
    </source>
</evidence>
<evidence type="ECO:0000269" key="4">
    <source>
    </source>
</evidence>
<evidence type="ECO:0000269" key="5">
    <source>
    </source>
</evidence>
<evidence type="ECO:0000305" key="6"/>